<name>EFP_SERP5</name>
<accession>A8G8T0</accession>
<proteinExistence type="inferred from homology"/>
<evidence type="ECO:0000255" key="1">
    <source>
        <dbReference type="HAMAP-Rule" id="MF_00141"/>
    </source>
</evidence>
<dbReference type="EMBL" id="CP000826">
    <property type="protein sequence ID" value="ABV39520.1"/>
    <property type="molecule type" value="Genomic_DNA"/>
</dbReference>
<dbReference type="SMR" id="A8G8T0"/>
<dbReference type="STRING" id="399741.Spro_0412"/>
<dbReference type="KEGG" id="spe:Spro_0412"/>
<dbReference type="eggNOG" id="COG0231">
    <property type="taxonomic scope" value="Bacteria"/>
</dbReference>
<dbReference type="HOGENOM" id="CLU_074944_0_0_6"/>
<dbReference type="OrthoDB" id="9801844at2"/>
<dbReference type="UniPathway" id="UPA00345"/>
<dbReference type="GO" id="GO:0005737">
    <property type="term" value="C:cytoplasm"/>
    <property type="evidence" value="ECO:0007669"/>
    <property type="project" value="UniProtKB-SubCell"/>
</dbReference>
<dbReference type="GO" id="GO:0003746">
    <property type="term" value="F:translation elongation factor activity"/>
    <property type="evidence" value="ECO:0007669"/>
    <property type="project" value="UniProtKB-UniRule"/>
</dbReference>
<dbReference type="GO" id="GO:0043043">
    <property type="term" value="P:peptide biosynthetic process"/>
    <property type="evidence" value="ECO:0007669"/>
    <property type="project" value="InterPro"/>
</dbReference>
<dbReference type="CDD" id="cd04470">
    <property type="entry name" value="S1_EF-P_repeat_1"/>
    <property type="match status" value="1"/>
</dbReference>
<dbReference type="CDD" id="cd05794">
    <property type="entry name" value="S1_EF-P_repeat_2"/>
    <property type="match status" value="1"/>
</dbReference>
<dbReference type="FunFam" id="2.30.30.30:FF:000003">
    <property type="entry name" value="Elongation factor P"/>
    <property type="match status" value="1"/>
</dbReference>
<dbReference type="FunFam" id="2.40.50.140:FF:000004">
    <property type="entry name" value="Elongation factor P"/>
    <property type="match status" value="1"/>
</dbReference>
<dbReference type="FunFam" id="2.40.50.140:FF:000009">
    <property type="entry name" value="Elongation factor P"/>
    <property type="match status" value="1"/>
</dbReference>
<dbReference type="Gene3D" id="2.30.30.30">
    <property type="match status" value="1"/>
</dbReference>
<dbReference type="Gene3D" id="2.40.50.140">
    <property type="entry name" value="Nucleic acid-binding proteins"/>
    <property type="match status" value="2"/>
</dbReference>
<dbReference type="HAMAP" id="MF_00141">
    <property type="entry name" value="EF_P"/>
    <property type="match status" value="1"/>
</dbReference>
<dbReference type="InterPro" id="IPR015365">
    <property type="entry name" value="Elong-fact-P_C"/>
</dbReference>
<dbReference type="InterPro" id="IPR012340">
    <property type="entry name" value="NA-bd_OB-fold"/>
</dbReference>
<dbReference type="InterPro" id="IPR014722">
    <property type="entry name" value="Rib_uL2_dom2"/>
</dbReference>
<dbReference type="InterPro" id="IPR020599">
    <property type="entry name" value="Transl_elong_fac_P/YeiP"/>
</dbReference>
<dbReference type="InterPro" id="IPR013185">
    <property type="entry name" value="Transl_elong_KOW-like"/>
</dbReference>
<dbReference type="InterPro" id="IPR001059">
    <property type="entry name" value="Transl_elong_P/YeiP_cen"/>
</dbReference>
<dbReference type="InterPro" id="IPR013852">
    <property type="entry name" value="Transl_elong_P/YeiP_CS"/>
</dbReference>
<dbReference type="InterPro" id="IPR011768">
    <property type="entry name" value="Transl_elongation_fac_P"/>
</dbReference>
<dbReference type="InterPro" id="IPR008991">
    <property type="entry name" value="Translation_prot_SH3-like_sf"/>
</dbReference>
<dbReference type="NCBIfam" id="TIGR00038">
    <property type="entry name" value="efp"/>
    <property type="match status" value="1"/>
</dbReference>
<dbReference type="NCBIfam" id="NF001810">
    <property type="entry name" value="PRK00529.1"/>
    <property type="match status" value="1"/>
</dbReference>
<dbReference type="PANTHER" id="PTHR30053">
    <property type="entry name" value="ELONGATION FACTOR P"/>
    <property type="match status" value="1"/>
</dbReference>
<dbReference type="PANTHER" id="PTHR30053:SF12">
    <property type="entry name" value="ELONGATION FACTOR P (EF-P) FAMILY PROTEIN"/>
    <property type="match status" value="1"/>
</dbReference>
<dbReference type="Pfam" id="PF01132">
    <property type="entry name" value="EFP"/>
    <property type="match status" value="1"/>
</dbReference>
<dbReference type="Pfam" id="PF08207">
    <property type="entry name" value="EFP_N"/>
    <property type="match status" value="1"/>
</dbReference>
<dbReference type="Pfam" id="PF09285">
    <property type="entry name" value="Elong-fact-P_C"/>
    <property type="match status" value="1"/>
</dbReference>
<dbReference type="PIRSF" id="PIRSF005901">
    <property type="entry name" value="EF-P"/>
    <property type="match status" value="1"/>
</dbReference>
<dbReference type="SMART" id="SM01185">
    <property type="entry name" value="EFP"/>
    <property type="match status" value="1"/>
</dbReference>
<dbReference type="SMART" id="SM00841">
    <property type="entry name" value="Elong-fact-P_C"/>
    <property type="match status" value="1"/>
</dbReference>
<dbReference type="SUPFAM" id="SSF50249">
    <property type="entry name" value="Nucleic acid-binding proteins"/>
    <property type="match status" value="2"/>
</dbReference>
<dbReference type="SUPFAM" id="SSF50104">
    <property type="entry name" value="Translation proteins SH3-like domain"/>
    <property type="match status" value="1"/>
</dbReference>
<dbReference type="PROSITE" id="PS01275">
    <property type="entry name" value="EFP"/>
    <property type="match status" value="1"/>
</dbReference>
<reference key="1">
    <citation type="submission" date="2007-09" db="EMBL/GenBank/DDBJ databases">
        <title>Complete sequence of chromosome of Serratia proteamaculans 568.</title>
        <authorList>
            <consortium name="US DOE Joint Genome Institute"/>
            <person name="Copeland A."/>
            <person name="Lucas S."/>
            <person name="Lapidus A."/>
            <person name="Barry K."/>
            <person name="Glavina del Rio T."/>
            <person name="Dalin E."/>
            <person name="Tice H."/>
            <person name="Pitluck S."/>
            <person name="Chain P."/>
            <person name="Malfatti S."/>
            <person name="Shin M."/>
            <person name="Vergez L."/>
            <person name="Schmutz J."/>
            <person name="Larimer F."/>
            <person name="Land M."/>
            <person name="Hauser L."/>
            <person name="Kyrpides N."/>
            <person name="Kim E."/>
            <person name="Taghavi S."/>
            <person name="Newman L."/>
            <person name="Vangronsveld J."/>
            <person name="van der Lelie D."/>
            <person name="Richardson P."/>
        </authorList>
    </citation>
    <scope>NUCLEOTIDE SEQUENCE [LARGE SCALE GENOMIC DNA]</scope>
    <source>
        <strain>568</strain>
    </source>
</reference>
<sequence>MATYSSNDFRPGLKIMFEGEPYAIESSEFVKPGKGQAFARVKMRRLLTGSRVEKTFKSTDSCEGADVVDTNMNYLYNDGEFYHFMHPETFEQHGVEEKTVSDAAKWLQDNAECIVTLWDGRPIAVQPPNFIEAEITDTDPGLKGDTAGTGGKPATLSTGAVVKVPLFVQIGEVVRVDTRSGEYVSRVK</sequence>
<organism>
    <name type="scientific">Serratia proteamaculans (strain 568)</name>
    <dbReference type="NCBI Taxonomy" id="399741"/>
    <lineage>
        <taxon>Bacteria</taxon>
        <taxon>Pseudomonadati</taxon>
        <taxon>Pseudomonadota</taxon>
        <taxon>Gammaproteobacteria</taxon>
        <taxon>Enterobacterales</taxon>
        <taxon>Yersiniaceae</taxon>
        <taxon>Serratia</taxon>
    </lineage>
</organism>
<protein>
    <recommendedName>
        <fullName evidence="1">Elongation factor P</fullName>
        <shortName evidence="1">EF-P</shortName>
    </recommendedName>
</protein>
<keyword id="KW-0963">Cytoplasm</keyword>
<keyword id="KW-0251">Elongation factor</keyword>
<keyword id="KW-0379">Hydroxylation</keyword>
<keyword id="KW-0648">Protein biosynthesis</keyword>
<comment type="function">
    <text evidence="1">Involved in peptide bond synthesis. Alleviates ribosome stalling that occurs when 3 or more consecutive Pro residues or the sequence PPG is present in a protein, possibly by augmenting the peptidyl transferase activity of the ribosome. Modification of Lys-34 is required for alleviation.</text>
</comment>
<comment type="pathway">
    <text evidence="1">Protein biosynthesis; polypeptide chain elongation.</text>
</comment>
<comment type="subcellular location">
    <subcellularLocation>
        <location evidence="1">Cytoplasm</location>
    </subcellularLocation>
</comment>
<comment type="PTM">
    <text evidence="1">May be beta-lysylated on the epsilon-amino group of Lys-34 by the combined action of EpmA and EpmB, and then hydroxylated on the C5 position of the same residue by EpmC (if this protein is present). Lysylation is critical for the stimulatory effect of EF-P on peptide-bond formation. The lysylation moiety may extend toward the peptidyltransferase center and stabilize the terminal 3-CCA end of the tRNA. Hydroxylation of the C5 position on Lys-34 may allow additional potential stabilizing hydrogen-bond interactions with the P-tRNA.</text>
</comment>
<comment type="similarity">
    <text evidence="1">Belongs to the elongation factor P family.</text>
</comment>
<gene>
    <name evidence="1" type="primary">efp</name>
    <name type="ordered locus">Spro_0412</name>
</gene>
<feature type="chain" id="PRO_1000057927" description="Elongation factor P">
    <location>
        <begin position="1"/>
        <end position="188"/>
    </location>
</feature>
<feature type="modified residue" description="N6-(3,6-diaminohexanoyl)-5-hydroxylysine" evidence="1">
    <location>
        <position position="34"/>
    </location>
</feature>